<accession>Q44044</accession>
<reference key="1">
    <citation type="submission" date="1996-03" db="EMBL/GenBank/DDBJ databases">
        <title>Cloning and sequencing of nifHDK genes of Alcaligenes faecalis.</title>
        <authorList>
            <person name="Zhang H."/>
            <person name="Zhu Y."/>
            <person name="Lin M."/>
            <person name="You C."/>
        </authorList>
    </citation>
    <scope>NUCLEOTIDE SEQUENCE [GENOMIC DNA]</scope>
</reference>
<protein>
    <recommendedName>
        <fullName>Nitrogenase iron protein</fullName>
        <ecNumber>1.18.6.1</ecNumber>
    </recommendedName>
    <alternativeName>
        <fullName>Nitrogenase Fe protein</fullName>
    </alternativeName>
    <alternativeName>
        <fullName>Nitrogenase component II</fullName>
    </alternativeName>
    <alternativeName>
        <fullName>Nitrogenase reductase</fullName>
    </alternativeName>
</protein>
<sequence>MAMRQCAIYGKGGIGKSTTTQNLVAALAELGKKVMIVGCDPKADSTRLILHSKAQNTIMEMAAEAGTVEDLELEDVLKTGYGDIKCVESGGPEPGVGCAGRGVITAINFLEEKAAYEDDLDFVFYDVLGDVVCGGFAMPIRENKAQEIYVVCSGEMMAMYAANNISKGIVKYANSGSVRLGGLICNSRNTDREDELIMALADKLGSQMIHFVPRDNVVQRAEIRRMTVIEYDPAAKQADEYRTLAKKIVENKKLVIPTPISMDELEALLMEFGIMDEEDMTIVGKTAAEEPAFCSL</sequence>
<feature type="chain" id="PRO_0000139478" description="Nitrogenase iron protein">
    <location>
        <begin position="1"/>
        <end position="296"/>
    </location>
</feature>
<feature type="binding site" evidence="2">
    <location>
        <begin position="10"/>
        <end position="17"/>
    </location>
    <ligand>
        <name>ATP</name>
        <dbReference type="ChEBI" id="CHEBI:30616"/>
    </ligand>
</feature>
<feature type="binding site" evidence="1">
    <location>
        <position position="98"/>
    </location>
    <ligand>
        <name>[4Fe-4S] cluster</name>
        <dbReference type="ChEBI" id="CHEBI:49883"/>
        <note>ligand shared between dimeric partners</note>
    </ligand>
</feature>
<feature type="binding site" evidence="1">
    <location>
        <position position="133"/>
    </location>
    <ligand>
        <name>[4Fe-4S] cluster</name>
        <dbReference type="ChEBI" id="CHEBI:49883"/>
        <note>ligand shared between dimeric partners</note>
    </ligand>
</feature>
<feature type="modified residue" description="ADP-ribosylarginine; by dinitrogenase reductase ADP-ribosyltransferase" evidence="1">
    <location>
        <position position="101"/>
    </location>
</feature>
<name>NIFH_ALCFA</name>
<dbReference type="EC" id="1.18.6.1"/>
<dbReference type="EMBL" id="X96609">
    <property type="protein sequence ID" value="CAA65427.1"/>
    <property type="molecule type" value="Genomic_DNA"/>
</dbReference>
<dbReference type="SMR" id="Q44044"/>
<dbReference type="GO" id="GO:0051539">
    <property type="term" value="F:4 iron, 4 sulfur cluster binding"/>
    <property type="evidence" value="ECO:0007669"/>
    <property type="project" value="UniProtKB-KW"/>
</dbReference>
<dbReference type="GO" id="GO:0005524">
    <property type="term" value="F:ATP binding"/>
    <property type="evidence" value="ECO:0007669"/>
    <property type="project" value="UniProtKB-UniRule"/>
</dbReference>
<dbReference type="GO" id="GO:0046872">
    <property type="term" value="F:metal ion binding"/>
    <property type="evidence" value="ECO:0007669"/>
    <property type="project" value="UniProtKB-KW"/>
</dbReference>
<dbReference type="GO" id="GO:0016163">
    <property type="term" value="F:nitrogenase activity"/>
    <property type="evidence" value="ECO:0007669"/>
    <property type="project" value="UniProtKB-UniRule"/>
</dbReference>
<dbReference type="GO" id="GO:0009399">
    <property type="term" value="P:nitrogen fixation"/>
    <property type="evidence" value="ECO:0007669"/>
    <property type="project" value="UniProtKB-UniRule"/>
</dbReference>
<dbReference type="CDD" id="cd02040">
    <property type="entry name" value="NifH"/>
    <property type="match status" value="1"/>
</dbReference>
<dbReference type="FunFam" id="3.40.50.300:FF:001379">
    <property type="entry name" value="Nitrogenase iron protein 1"/>
    <property type="match status" value="1"/>
</dbReference>
<dbReference type="Gene3D" id="3.40.50.300">
    <property type="entry name" value="P-loop containing nucleotide triphosphate hydrolases"/>
    <property type="match status" value="1"/>
</dbReference>
<dbReference type="HAMAP" id="MF_00533">
    <property type="entry name" value="NifH"/>
    <property type="match status" value="1"/>
</dbReference>
<dbReference type="InterPro" id="IPR030655">
    <property type="entry name" value="NifH/chlL_CS"/>
</dbReference>
<dbReference type="InterPro" id="IPR000392">
    <property type="entry name" value="NifH/frxC"/>
</dbReference>
<dbReference type="InterPro" id="IPR005977">
    <property type="entry name" value="Nitrogenase_Fe_NifH"/>
</dbReference>
<dbReference type="InterPro" id="IPR027417">
    <property type="entry name" value="P-loop_NTPase"/>
</dbReference>
<dbReference type="NCBIfam" id="TIGR01287">
    <property type="entry name" value="nifH"/>
    <property type="match status" value="1"/>
</dbReference>
<dbReference type="PANTHER" id="PTHR42864">
    <property type="entry name" value="LIGHT-INDEPENDENT PROTOCHLOROPHYLLIDE REDUCTASE IRON-SULFUR ATP-BINDING PROTEIN"/>
    <property type="match status" value="1"/>
</dbReference>
<dbReference type="PANTHER" id="PTHR42864:SF2">
    <property type="entry name" value="LIGHT-INDEPENDENT PROTOCHLOROPHYLLIDE REDUCTASE IRON-SULFUR ATP-BINDING PROTEIN"/>
    <property type="match status" value="1"/>
</dbReference>
<dbReference type="Pfam" id="PF00142">
    <property type="entry name" value="Fer4_NifH"/>
    <property type="match status" value="1"/>
</dbReference>
<dbReference type="PIRSF" id="PIRSF000363">
    <property type="entry name" value="Nitrogenase_iron"/>
    <property type="match status" value="1"/>
</dbReference>
<dbReference type="PRINTS" id="PR00091">
    <property type="entry name" value="NITROGNASEII"/>
</dbReference>
<dbReference type="SUPFAM" id="SSF52540">
    <property type="entry name" value="P-loop containing nucleoside triphosphate hydrolases"/>
    <property type="match status" value="1"/>
</dbReference>
<dbReference type="PROSITE" id="PS00746">
    <property type="entry name" value="NIFH_FRXC_1"/>
    <property type="match status" value="1"/>
</dbReference>
<dbReference type="PROSITE" id="PS00692">
    <property type="entry name" value="NIFH_FRXC_2"/>
    <property type="match status" value="1"/>
</dbReference>
<dbReference type="PROSITE" id="PS51026">
    <property type="entry name" value="NIFH_FRXC_3"/>
    <property type="match status" value="1"/>
</dbReference>
<organism>
    <name type="scientific">Alcaligenes faecalis</name>
    <dbReference type="NCBI Taxonomy" id="511"/>
    <lineage>
        <taxon>Bacteria</taxon>
        <taxon>Pseudomonadati</taxon>
        <taxon>Pseudomonadota</taxon>
        <taxon>Betaproteobacteria</taxon>
        <taxon>Burkholderiales</taxon>
        <taxon>Alcaligenaceae</taxon>
        <taxon>Alcaligenes</taxon>
    </lineage>
</organism>
<keyword id="KW-0004">4Fe-4S</keyword>
<keyword id="KW-0013">ADP-ribosylation</keyword>
<keyword id="KW-0067">ATP-binding</keyword>
<keyword id="KW-0408">Iron</keyword>
<keyword id="KW-0411">Iron-sulfur</keyword>
<keyword id="KW-0479">Metal-binding</keyword>
<keyword id="KW-0535">Nitrogen fixation</keyword>
<keyword id="KW-0547">Nucleotide-binding</keyword>
<keyword id="KW-0560">Oxidoreductase</keyword>
<proteinExistence type="inferred from homology"/>
<gene>
    <name type="primary">nifH</name>
</gene>
<evidence type="ECO:0000250" key="1"/>
<evidence type="ECO:0000255" key="2"/>
<evidence type="ECO:0000305" key="3"/>
<comment type="function">
    <text evidence="1">The key enzymatic reactions in nitrogen fixation are catalyzed by the nitrogenase complex, which has 2 components: the iron protein and the molybdenum-iron protein.</text>
</comment>
<comment type="catalytic activity">
    <reaction>
        <text>N2 + 8 reduced [2Fe-2S]-[ferredoxin] + 16 ATP + 16 H2O = H2 + 8 oxidized [2Fe-2S]-[ferredoxin] + 2 NH4(+) + 16 ADP + 16 phosphate + 6 H(+)</text>
        <dbReference type="Rhea" id="RHEA:21448"/>
        <dbReference type="Rhea" id="RHEA-COMP:10000"/>
        <dbReference type="Rhea" id="RHEA-COMP:10001"/>
        <dbReference type="ChEBI" id="CHEBI:15377"/>
        <dbReference type="ChEBI" id="CHEBI:15378"/>
        <dbReference type="ChEBI" id="CHEBI:17997"/>
        <dbReference type="ChEBI" id="CHEBI:18276"/>
        <dbReference type="ChEBI" id="CHEBI:28938"/>
        <dbReference type="ChEBI" id="CHEBI:30616"/>
        <dbReference type="ChEBI" id="CHEBI:33737"/>
        <dbReference type="ChEBI" id="CHEBI:33738"/>
        <dbReference type="ChEBI" id="CHEBI:43474"/>
        <dbReference type="ChEBI" id="CHEBI:456216"/>
        <dbReference type="EC" id="1.18.6.1"/>
    </reaction>
</comment>
<comment type="cofactor">
    <cofactor evidence="1">
        <name>[4Fe-4S] cluster</name>
        <dbReference type="ChEBI" id="CHEBI:49883"/>
    </cofactor>
    <text evidence="1">Binds 1 [4Fe-4S] cluster per dimer.</text>
</comment>
<comment type="subunit">
    <text evidence="1">Homodimer.</text>
</comment>
<comment type="PTM">
    <text evidence="1">The reversible ADP-ribosylation of Arg-101 inactivates the nitrogenase reductase and regulates nitrogenase activity.</text>
</comment>
<comment type="similarity">
    <text evidence="3">Belongs to the NifH/BchL/ChlL family.</text>
</comment>